<keyword id="KW-0349">Heme</keyword>
<keyword id="KW-0376">Hydrogen peroxide</keyword>
<keyword id="KW-0408">Iron</keyword>
<keyword id="KW-0479">Metal-binding</keyword>
<keyword id="KW-0560">Oxidoreductase</keyword>
<keyword id="KW-0575">Peroxidase</keyword>
<accession>Q31U45</accession>
<feature type="chain" id="PRO_0000354929" description="Catalase-peroxidase">
    <location>
        <begin position="1"/>
        <end position="726"/>
    </location>
</feature>
<feature type="region of interest" description="Disordered" evidence="2">
    <location>
        <begin position="1"/>
        <end position="33"/>
    </location>
</feature>
<feature type="active site" description="Proton acceptor" evidence="1">
    <location>
        <position position="106"/>
    </location>
</feature>
<feature type="binding site" description="axial binding residue" evidence="1">
    <location>
        <position position="267"/>
    </location>
    <ligand>
        <name>heme b</name>
        <dbReference type="ChEBI" id="CHEBI:60344"/>
    </ligand>
    <ligandPart>
        <name>Fe</name>
        <dbReference type="ChEBI" id="CHEBI:18248"/>
    </ligandPart>
</feature>
<feature type="site" description="Transition state stabilizer" evidence="1">
    <location>
        <position position="102"/>
    </location>
</feature>
<feature type="cross-link" description="Tryptophyl-tyrosyl-methioninium (Trp-Tyr) (with M-252)" evidence="1">
    <location>
        <begin position="105"/>
        <end position="226"/>
    </location>
</feature>
<feature type="cross-link" description="Tryptophyl-tyrosyl-methioninium (Tyr-Met) (with W-105)" evidence="1">
    <location>
        <begin position="226"/>
        <end position="252"/>
    </location>
</feature>
<organism>
    <name type="scientific">Shigella boydii serotype 4 (strain Sb227)</name>
    <dbReference type="NCBI Taxonomy" id="300268"/>
    <lineage>
        <taxon>Bacteria</taxon>
        <taxon>Pseudomonadati</taxon>
        <taxon>Pseudomonadota</taxon>
        <taxon>Gammaproteobacteria</taxon>
        <taxon>Enterobacterales</taxon>
        <taxon>Enterobacteriaceae</taxon>
        <taxon>Shigella</taxon>
    </lineage>
</organism>
<proteinExistence type="inferred from homology"/>
<evidence type="ECO:0000255" key="1">
    <source>
        <dbReference type="HAMAP-Rule" id="MF_01961"/>
    </source>
</evidence>
<evidence type="ECO:0000256" key="2">
    <source>
        <dbReference type="SAM" id="MobiDB-lite"/>
    </source>
</evidence>
<name>KATG_SHIBS</name>
<gene>
    <name evidence="1" type="primary">katG</name>
    <name type="ordered locus">SBO_3962</name>
</gene>
<sequence>MSTSDDIHNTTATGKCPFHQGGHDQSAGAGTTTRDWWPNQLRVDLLNQHSNRSNPLGEDFDYRKEFSKLDYYGLKKDLKALLTESQPWWPADWGSYAGLFIRMAWHGAGTYRSIDGRGGAGRGQQRFAPLNSWPDNVSLDKARRLLWPIKQKYGQKISWADLFILAGNVALENSGFRTFGFGAGREDVWEPDLDVNWGDEKAWLTHRHPEALAKAPLGATEMGLIYVNPEGPDHSGEPLSAAAAIRATFGNMGMNDEETVALIAGGHTLGKTHGAGPTSNVGPDPEAAPIEEQGLGWASTYGSGVGADAITSGLEVVWTQTPTQWSNYFFENLFKYEWVQTRSPAGAIQFEAVDAPEIIPDPFDPSKKRKPTMLVTDLTLRFDPEFEKISRRFLNDPQAFNEAFARAWFKLTHRDMGPKSRYIGPEVPKEDLIWQDPLPQPIYNPTEQDIIDLKFAIADSGLSVSELVSVAWASASTFRGGDKRGGANGARLALMPQRDWDVNAAAVRALPVLEKIQKESGKASLADIIVLAGVVGVEKAASAAGLSIHVPFAPGRVDARQDQTDIEMFELLEPIADGFRNYRARLDVSTTESLLIDKAQQLTLTAPEMTALVGGMRVLGANFDSSKNGVFTDRVGVLSNDFFVNLLDMRYEWKATDESKELFEGRDRETGEVKYTASRADLVFGSNSVLRAVAEVYASSDAHEKFVKDFVAAWVKVMNLDRFDLL</sequence>
<dbReference type="EC" id="1.11.1.21" evidence="1"/>
<dbReference type="EMBL" id="CP000036">
    <property type="protein sequence ID" value="ABB68413.1"/>
    <property type="molecule type" value="Genomic_DNA"/>
</dbReference>
<dbReference type="RefSeq" id="WP_004987868.1">
    <property type="nucleotide sequence ID" value="NC_007613.1"/>
</dbReference>
<dbReference type="SMR" id="Q31U45"/>
<dbReference type="PeroxiBase" id="2670">
    <property type="entry name" value="SboCP01"/>
</dbReference>
<dbReference type="KEGG" id="sbo:SBO_3962"/>
<dbReference type="HOGENOM" id="CLU_025424_2_0_6"/>
<dbReference type="Proteomes" id="UP000007067">
    <property type="component" value="Chromosome"/>
</dbReference>
<dbReference type="GO" id="GO:0005829">
    <property type="term" value="C:cytosol"/>
    <property type="evidence" value="ECO:0007669"/>
    <property type="project" value="TreeGrafter"/>
</dbReference>
<dbReference type="GO" id="GO:0004096">
    <property type="term" value="F:catalase activity"/>
    <property type="evidence" value="ECO:0007669"/>
    <property type="project" value="UniProtKB-UniRule"/>
</dbReference>
<dbReference type="GO" id="GO:0020037">
    <property type="term" value="F:heme binding"/>
    <property type="evidence" value="ECO:0007669"/>
    <property type="project" value="InterPro"/>
</dbReference>
<dbReference type="GO" id="GO:0046872">
    <property type="term" value="F:metal ion binding"/>
    <property type="evidence" value="ECO:0007669"/>
    <property type="project" value="UniProtKB-KW"/>
</dbReference>
<dbReference type="GO" id="GO:0070301">
    <property type="term" value="P:cellular response to hydrogen peroxide"/>
    <property type="evidence" value="ECO:0007669"/>
    <property type="project" value="TreeGrafter"/>
</dbReference>
<dbReference type="GO" id="GO:0042744">
    <property type="term" value="P:hydrogen peroxide catabolic process"/>
    <property type="evidence" value="ECO:0007669"/>
    <property type="project" value="UniProtKB-KW"/>
</dbReference>
<dbReference type="CDD" id="cd08200">
    <property type="entry name" value="catalase_peroxidase_2"/>
    <property type="match status" value="1"/>
</dbReference>
<dbReference type="FunFam" id="1.10.420.10:FF:000002">
    <property type="entry name" value="Catalase-peroxidase"/>
    <property type="match status" value="1"/>
</dbReference>
<dbReference type="FunFam" id="1.10.420.10:FF:000004">
    <property type="entry name" value="Catalase-peroxidase"/>
    <property type="match status" value="1"/>
</dbReference>
<dbReference type="FunFam" id="1.10.520.10:FF:000002">
    <property type="entry name" value="Catalase-peroxidase"/>
    <property type="match status" value="1"/>
</dbReference>
<dbReference type="Gene3D" id="1.10.520.10">
    <property type="match status" value="2"/>
</dbReference>
<dbReference type="Gene3D" id="1.10.420.10">
    <property type="entry name" value="Peroxidase, domain 2"/>
    <property type="match status" value="2"/>
</dbReference>
<dbReference type="HAMAP" id="MF_01961">
    <property type="entry name" value="Catal_peroxid"/>
    <property type="match status" value="1"/>
</dbReference>
<dbReference type="InterPro" id="IPR000763">
    <property type="entry name" value="Catalase_peroxidase"/>
</dbReference>
<dbReference type="InterPro" id="IPR002016">
    <property type="entry name" value="Haem_peroxidase"/>
</dbReference>
<dbReference type="InterPro" id="IPR010255">
    <property type="entry name" value="Haem_peroxidase_sf"/>
</dbReference>
<dbReference type="InterPro" id="IPR019794">
    <property type="entry name" value="Peroxidases_AS"/>
</dbReference>
<dbReference type="InterPro" id="IPR019793">
    <property type="entry name" value="Peroxidases_heam-ligand_BS"/>
</dbReference>
<dbReference type="NCBIfam" id="TIGR00198">
    <property type="entry name" value="cat_per_HPI"/>
    <property type="match status" value="1"/>
</dbReference>
<dbReference type="NCBIfam" id="NF011635">
    <property type="entry name" value="PRK15061.1"/>
    <property type="match status" value="1"/>
</dbReference>
<dbReference type="PANTHER" id="PTHR30555:SF0">
    <property type="entry name" value="CATALASE-PEROXIDASE"/>
    <property type="match status" value="1"/>
</dbReference>
<dbReference type="PANTHER" id="PTHR30555">
    <property type="entry name" value="HYDROPEROXIDASE I, BIFUNCTIONAL CATALASE-PEROXIDASE"/>
    <property type="match status" value="1"/>
</dbReference>
<dbReference type="Pfam" id="PF00141">
    <property type="entry name" value="peroxidase"/>
    <property type="match status" value="2"/>
</dbReference>
<dbReference type="PRINTS" id="PR00460">
    <property type="entry name" value="BPEROXIDASE"/>
</dbReference>
<dbReference type="PRINTS" id="PR00458">
    <property type="entry name" value="PEROXIDASE"/>
</dbReference>
<dbReference type="SUPFAM" id="SSF48113">
    <property type="entry name" value="Heme-dependent peroxidases"/>
    <property type="match status" value="2"/>
</dbReference>
<dbReference type="PROSITE" id="PS00435">
    <property type="entry name" value="PEROXIDASE_1"/>
    <property type="match status" value="1"/>
</dbReference>
<dbReference type="PROSITE" id="PS00436">
    <property type="entry name" value="PEROXIDASE_2"/>
    <property type="match status" value="1"/>
</dbReference>
<dbReference type="PROSITE" id="PS50873">
    <property type="entry name" value="PEROXIDASE_4"/>
    <property type="match status" value="1"/>
</dbReference>
<protein>
    <recommendedName>
        <fullName evidence="1">Catalase-peroxidase</fullName>
        <shortName evidence="1">CP</shortName>
        <ecNumber evidence="1">1.11.1.21</ecNumber>
    </recommendedName>
    <alternativeName>
        <fullName evidence="1">Peroxidase/catalase</fullName>
    </alternativeName>
</protein>
<reference key="1">
    <citation type="journal article" date="2005" name="Nucleic Acids Res.">
        <title>Genome dynamics and diversity of Shigella species, the etiologic agents of bacillary dysentery.</title>
        <authorList>
            <person name="Yang F."/>
            <person name="Yang J."/>
            <person name="Zhang X."/>
            <person name="Chen L."/>
            <person name="Jiang Y."/>
            <person name="Yan Y."/>
            <person name="Tang X."/>
            <person name="Wang J."/>
            <person name="Xiong Z."/>
            <person name="Dong J."/>
            <person name="Xue Y."/>
            <person name="Zhu Y."/>
            <person name="Xu X."/>
            <person name="Sun L."/>
            <person name="Chen S."/>
            <person name="Nie H."/>
            <person name="Peng J."/>
            <person name="Xu J."/>
            <person name="Wang Y."/>
            <person name="Yuan Z."/>
            <person name="Wen Y."/>
            <person name="Yao Z."/>
            <person name="Shen Y."/>
            <person name="Qiang B."/>
            <person name="Hou Y."/>
            <person name="Yu J."/>
            <person name="Jin Q."/>
        </authorList>
    </citation>
    <scope>NUCLEOTIDE SEQUENCE [LARGE SCALE GENOMIC DNA]</scope>
    <source>
        <strain>Sb227</strain>
    </source>
</reference>
<comment type="function">
    <text evidence="1">Bifunctional enzyme with both catalase and broad-spectrum peroxidase activity.</text>
</comment>
<comment type="catalytic activity">
    <reaction evidence="1">
        <text>H2O2 + AH2 = A + 2 H2O</text>
        <dbReference type="Rhea" id="RHEA:30275"/>
        <dbReference type="ChEBI" id="CHEBI:13193"/>
        <dbReference type="ChEBI" id="CHEBI:15377"/>
        <dbReference type="ChEBI" id="CHEBI:16240"/>
        <dbReference type="ChEBI" id="CHEBI:17499"/>
        <dbReference type="EC" id="1.11.1.21"/>
    </reaction>
</comment>
<comment type="catalytic activity">
    <reaction evidence="1">
        <text>2 H2O2 = O2 + 2 H2O</text>
        <dbReference type="Rhea" id="RHEA:20309"/>
        <dbReference type="ChEBI" id="CHEBI:15377"/>
        <dbReference type="ChEBI" id="CHEBI:15379"/>
        <dbReference type="ChEBI" id="CHEBI:16240"/>
        <dbReference type="EC" id="1.11.1.21"/>
    </reaction>
</comment>
<comment type="cofactor">
    <cofactor evidence="1">
        <name>heme b</name>
        <dbReference type="ChEBI" id="CHEBI:60344"/>
    </cofactor>
    <text evidence="1">Binds 1 heme b (iron(II)-protoporphyrin IX) group per dimer.</text>
</comment>
<comment type="subunit">
    <text evidence="1">Homodimer or homotetramer.</text>
</comment>
<comment type="PTM">
    <text evidence="1">Formation of the three residue Trp-Tyr-Met cross-link is important for the catalase, but not the peroxidase activity of the enzyme.</text>
</comment>
<comment type="similarity">
    <text evidence="1">Belongs to the peroxidase family. Peroxidase/catalase subfamily.</text>
</comment>